<sequence>MKDWSAKQYLKFEDERSRPARDLLAQIPLSAPRKVVDIGCGPGNSTKLLVERWPDAQISGFDTSPDMIDTAKTHLPDVEFFISDAASFEPDAETDVLFSNAVFQWLPDHVEQLQRLLSLLQPGAFLAVQMPDNMGEQTHVGMRDVAKTAPFAMKIATKGRAALPPVATYYNAFADDAARIDIWHTIYNHPLAGVDAIVEWVKGTGLRPFLDPLDEQEQADYLKAYKARIAEHYPMTADGKVLLRFPRIFLVVQKK</sequence>
<feature type="chain" id="PRO_0000218078" description="Trans-aconitate 2-methyltransferase">
    <location>
        <begin position="1"/>
        <end position="255"/>
    </location>
</feature>
<protein>
    <recommendedName>
        <fullName evidence="1">Trans-aconitate 2-methyltransferase</fullName>
        <ecNumber evidence="1">2.1.1.144</ecNumber>
    </recommendedName>
</protein>
<accession>Q8FZM5</accession>
<accession>G0KBL3</accession>
<comment type="function">
    <text evidence="1">Catalyzes the S-adenosylmethionine monomethyl esterification of trans-aconitate.</text>
</comment>
<comment type="catalytic activity">
    <reaction evidence="1">
        <text>trans-aconitate + S-adenosyl-L-methionine = (E)-3-(methoxycarbonyl)pent-2-enedioate + S-adenosyl-L-homocysteine</text>
        <dbReference type="Rhea" id="RHEA:14969"/>
        <dbReference type="ChEBI" id="CHEBI:15708"/>
        <dbReference type="ChEBI" id="CHEBI:57470"/>
        <dbReference type="ChEBI" id="CHEBI:57856"/>
        <dbReference type="ChEBI" id="CHEBI:59789"/>
        <dbReference type="EC" id="2.1.1.144"/>
    </reaction>
</comment>
<comment type="subcellular location">
    <subcellularLocation>
        <location evidence="1">Cytoplasm</location>
    </subcellularLocation>
</comment>
<comment type="similarity">
    <text evidence="1">Belongs to the methyltransferase superfamily. Tam family.</text>
</comment>
<keyword id="KW-0963">Cytoplasm</keyword>
<keyword id="KW-0489">Methyltransferase</keyword>
<keyword id="KW-0949">S-adenosyl-L-methionine</keyword>
<keyword id="KW-0808">Transferase</keyword>
<dbReference type="EC" id="2.1.1.144" evidence="1"/>
<dbReference type="EMBL" id="AE014291">
    <property type="protein sequence ID" value="AAN30366.1"/>
    <property type="molecule type" value="Genomic_DNA"/>
</dbReference>
<dbReference type="EMBL" id="CP002997">
    <property type="protein sequence ID" value="AEM18782.1"/>
    <property type="molecule type" value="Genomic_DNA"/>
</dbReference>
<dbReference type="RefSeq" id="WP_004691577.1">
    <property type="nucleotide sequence ID" value="NZ_KN046804.1"/>
</dbReference>
<dbReference type="SMR" id="Q8FZM5"/>
<dbReference type="GeneID" id="55591104"/>
<dbReference type="KEGG" id="bms:BR1455"/>
<dbReference type="KEGG" id="bsi:BS1330_I1449"/>
<dbReference type="PATRIC" id="fig|204722.22.peg.416"/>
<dbReference type="HOGENOM" id="CLU_037990_5_2_5"/>
<dbReference type="PhylomeDB" id="Q8FZM5"/>
<dbReference type="Proteomes" id="UP000007104">
    <property type="component" value="Chromosome I"/>
</dbReference>
<dbReference type="GO" id="GO:0005737">
    <property type="term" value="C:cytoplasm"/>
    <property type="evidence" value="ECO:0007669"/>
    <property type="project" value="UniProtKB-SubCell"/>
</dbReference>
<dbReference type="GO" id="GO:0030798">
    <property type="term" value="F:trans-aconitate 2-methyltransferase activity"/>
    <property type="evidence" value="ECO:0007669"/>
    <property type="project" value="UniProtKB-UniRule"/>
</dbReference>
<dbReference type="GO" id="GO:0032259">
    <property type="term" value="P:methylation"/>
    <property type="evidence" value="ECO:0007669"/>
    <property type="project" value="UniProtKB-KW"/>
</dbReference>
<dbReference type="CDD" id="cd02440">
    <property type="entry name" value="AdoMet_MTases"/>
    <property type="match status" value="1"/>
</dbReference>
<dbReference type="Gene3D" id="1.10.150.290">
    <property type="entry name" value="S-adenosyl-L-methionine-dependent methyltransferases"/>
    <property type="match status" value="1"/>
</dbReference>
<dbReference type="Gene3D" id="3.40.50.150">
    <property type="entry name" value="Vaccinia Virus protein VP39"/>
    <property type="match status" value="1"/>
</dbReference>
<dbReference type="HAMAP" id="MF_00560">
    <property type="entry name" value="Tran_acon_Me_trans"/>
    <property type="match status" value="1"/>
</dbReference>
<dbReference type="InterPro" id="IPR041698">
    <property type="entry name" value="Methyltransf_25"/>
</dbReference>
<dbReference type="InterPro" id="IPR029063">
    <property type="entry name" value="SAM-dependent_MTases_sf"/>
</dbReference>
<dbReference type="InterPro" id="IPR023506">
    <property type="entry name" value="Trans-aconitate_MeTrfase"/>
</dbReference>
<dbReference type="InterPro" id="IPR023149">
    <property type="entry name" value="Trans_acon_MeTrfase_C"/>
</dbReference>
<dbReference type="NCBIfam" id="NF002463">
    <property type="entry name" value="PRK01683.1"/>
    <property type="match status" value="1"/>
</dbReference>
<dbReference type="PANTHER" id="PTHR43861:SF1">
    <property type="entry name" value="TRANS-ACONITATE 2-METHYLTRANSFERASE"/>
    <property type="match status" value="1"/>
</dbReference>
<dbReference type="PANTHER" id="PTHR43861">
    <property type="entry name" value="TRANS-ACONITATE 2-METHYLTRANSFERASE-RELATED"/>
    <property type="match status" value="1"/>
</dbReference>
<dbReference type="Pfam" id="PF13649">
    <property type="entry name" value="Methyltransf_25"/>
    <property type="match status" value="1"/>
</dbReference>
<dbReference type="SUPFAM" id="SSF53335">
    <property type="entry name" value="S-adenosyl-L-methionine-dependent methyltransferases"/>
    <property type="match status" value="1"/>
</dbReference>
<name>TAM_BRUSU</name>
<evidence type="ECO:0000255" key="1">
    <source>
        <dbReference type="HAMAP-Rule" id="MF_00560"/>
    </source>
</evidence>
<organism>
    <name type="scientific">Brucella suis biovar 1 (strain 1330)</name>
    <dbReference type="NCBI Taxonomy" id="204722"/>
    <lineage>
        <taxon>Bacteria</taxon>
        <taxon>Pseudomonadati</taxon>
        <taxon>Pseudomonadota</taxon>
        <taxon>Alphaproteobacteria</taxon>
        <taxon>Hyphomicrobiales</taxon>
        <taxon>Brucellaceae</taxon>
        <taxon>Brucella/Ochrobactrum group</taxon>
        <taxon>Brucella</taxon>
    </lineage>
</organism>
<reference key="1">
    <citation type="journal article" date="2002" name="Proc. Natl. Acad. Sci. U.S.A.">
        <title>The Brucella suis genome reveals fundamental similarities between animal and plant pathogens and symbionts.</title>
        <authorList>
            <person name="Paulsen I.T."/>
            <person name="Seshadri R."/>
            <person name="Nelson K.E."/>
            <person name="Eisen J.A."/>
            <person name="Heidelberg J.F."/>
            <person name="Read T.D."/>
            <person name="Dodson R.J."/>
            <person name="Umayam L.A."/>
            <person name="Brinkac L.M."/>
            <person name="Beanan M.J."/>
            <person name="Daugherty S.C."/>
            <person name="DeBoy R.T."/>
            <person name="Durkin A.S."/>
            <person name="Kolonay J.F."/>
            <person name="Madupu R."/>
            <person name="Nelson W.C."/>
            <person name="Ayodeji B."/>
            <person name="Kraul M."/>
            <person name="Shetty J."/>
            <person name="Malek J.A."/>
            <person name="Van Aken S.E."/>
            <person name="Riedmuller S."/>
            <person name="Tettelin H."/>
            <person name="Gill S.R."/>
            <person name="White O."/>
            <person name="Salzberg S.L."/>
            <person name="Hoover D.L."/>
            <person name="Lindler L.E."/>
            <person name="Halling S.M."/>
            <person name="Boyle S.M."/>
            <person name="Fraser C.M."/>
        </authorList>
    </citation>
    <scope>NUCLEOTIDE SEQUENCE [LARGE SCALE GENOMIC DNA]</scope>
    <source>
        <strain>1330</strain>
    </source>
</reference>
<reference key="2">
    <citation type="journal article" date="2011" name="J. Bacteriol.">
        <title>Revised genome sequence of Brucella suis 1330.</title>
        <authorList>
            <person name="Tae H."/>
            <person name="Shallom S."/>
            <person name="Settlage R."/>
            <person name="Preston D."/>
            <person name="Adams L.G."/>
            <person name="Garner H.R."/>
        </authorList>
    </citation>
    <scope>NUCLEOTIDE SEQUENCE [LARGE SCALE GENOMIC DNA]</scope>
    <source>
        <strain>1330</strain>
    </source>
</reference>
<gene>
    <name evidence="1" type="primary">tam</name>
    <name type="ordered locus">BR1455</name>
    <name type="ordered locus">BS1330_I1449</name>
</gene>
<proteinExistence type="inferred from homology"/>